<sequence length="216" mass="24949">MAQIIDLVPWDECSAHLYASPAVLLPLERVRHPLAGVKHQLYHPALPSLRRMDMDTVKGCLSDEHCQSSTYFSKDDFNKAHFTLLGVPNKPLQCLDFTATGQKLCHKYRGGKMIPIAPGINRVDWPCFTRAIEDWSKFVSRSEEFKLPCANKRVEGFSGYAVRYLKPEVTQNWRYCLNQNPSLDRYGQKPLPFDSLNAFRRFGSHYSRINYLTPWH</sequence>
<proteinExistence type="evidence at protein level"/>
<dbReference type="EMBL" id="AK006802">
    <property type="protein sequence ID" value="BAB24747.1"/>
    <property type="molecule type" value="mRNA"/>
</dbReference>
<dbReference type="EMBL" id="BC087870">
    <property type="protein sequence ID" value="AAH87870.1"/>
    <property type="molecule type" value="mRNA"/>
</dbReference>
<dbReference type="EMBL" id="BC104382">
    <property type="protein sequence ID" value="AAI04383.1"/>
    <property type="molecule type" value="mRNA"/>
</dbReference>
<dbReference type="EMBL" id="BC104383">
    <property type="protein sequence ID" value="AAI04384.1"/>
    <property type="molecule type" value="mRNA"/>
</dbReference>
<dbReference type="EMBL" id="BK001511">
    <property type="protein sequence ID" value="DAA01955.1"/>
    <property type="molecule type" value="mRNA"/>
</dbReference>
<dbReference type="CCDS" id="CCDS22557.1">
    <molecule id="Q6IMH0-1"/>
</dbReference>
<dbReference type="CCDS" id="CCDS22558.1">
    <molecule id="Q6IMH0-2"/>
</dbReference>
<dbReference type="RefSeq" id="NP_082808.1">
    <molecule id="Q6IMH0-2"/>
    <property type="nucleotide sequence ID" value="NM_028532.3"/>
</dbReference>
<dbReference type="RefSeq" id="NP_955534.1">
    <molecule id="Q6IMH0-1"/>
    <property type="nucleotide sequence ID" value="NM_199455.2"/>
</dbReference>
<dbReference type="RefSeq" id="XP_036010214.1">
    <molecule id="Q6IMH0-1"/>
    <property type="nucleotide sequence ID" value="XM_036154321.1"/>
</dbReference>
<dbReference type="RefSeq" id="XP_036010215.1">
    <molecule id="Q6IMH0-1"/>
    <property type="nucleotide sequence ID" value="XM_036154322.1"/>
</dbReference>
<dbReference type="RefSeq" id="XP_036010216.1">
    <molecule id="Q6IMH0-2"/>
    <property type="nucleotide sequence ID" value="XM_036154323.1"/>
</dbReference>
<dbReference type="PDB" id="8IYJ">
    <property type="method" value="EM"/>
    <property type="resolution" value="3.50 A"/>
    <property type="chains" value="Z1=1-216"/>
</dbReference>
<dbReference type="PDBsum" id="8IYJ"/>
<dbReference type="EMDB" id="EMD-35823"/>
<dbReference type="SMR" id="Q6IMH0"/>
<dbReference type="STRING" id="10090.ENSMUSP00000125362"/>
<dbReference type="iPTMnet" id="Q6IMH0"/>
<dbReference type="PhosphoSitePlus" id="Q6IMH0"/>
<dbReference type="PaxDb" id="10090-ENSMUSP00000125362"/>
<dbReference type="ProteomicsDB" id="263103">
    <molecule id="Q6IMH0-1"/>
</dbReference>
<dbReference type="ProteomicsDB" id="263104">
    <molecule id="Q6IMH0-2"/>
</dbReference>
<dbReference type="Antibodypedia" id="62568">
    <property type="antibodies" value="5 antibodies from 5 providers"/>
</dbReference>
<dbReference type="DNASU" id="73407"/>
<dbReference type="Ensembl" id="ENSMUST00000098480.9">
    <molecule id="Q6IMH0-2"/>
    <property type="protein sequence ID" value="ENSMUSP00000096080.3"/>
    <property type="gene ID" value="ENSMUSG00000090206.9"/>
</dbReference>
<dbReference type="Ensembl" id="ENSMUST00000161029.9">
    <molecule id="Q6IMH0-1"/>
    <property type="protein sequence ID" value="ENSMUSP00000125362.2"/>
    <property type="gene ID" value="ENSMUSG00000090206.9"/>
</dbReference>
<dbReference type="GeneID" id="73407"/>
<dbReference type="KEGG" id="mmu:73407"/>
<dbReference type="UCSC" id="uc009myd.2">
    <molecule id="Q6IMH0-1"/>
    <property type="organism name" value="mouse"/>
</dbReference>
<dbReference type="UCSC" id="uc009mye.2">
    <molecule id="Q6IMH0-2"/>
    <property type="organism name" value="mouse"/>
</dbReference>
<dbReference type="AGR" id="MGI:1920657"/>
<dbReference type="CTD" id="374739"/>
<dbReference type="MGI" id="MGI:1920657">
    <property type="gene designation" value="Spmip8"/>
</dbReference>
<dbReference type="VEuPathDB" id="HostDB:ENSMUSG00000090206"/>
<dbReference type="eggNOG" id="ENOG502R4EY">
    <property type="taxonomic scope" value="Eukaryota"/>
</dbReference>
<dbReference type="GeneTree" id="ENSGT00390000013928"/>
<dbReference type="HOGENOM" id="CLU_2249207_0_0_1"/>
<dbReference type="InParanoid" id="Q6IMH0"/>
<dbReference type="OMA" id="YPQYSRN"/>
<dbReference type="OrthoDB" id="9970246at2759"/>
<dbReference type="PhylomeDB" id="Q6IMH0"/>
<dbReference type="TreeFam" id="TF329060"/>
<dbReference type="BioGRID-ORCS" id="73407">
    <property type="hits" value="1 hit in 73 CRISPR screens"/>
</dbReference>
<dbReference type="PRO" id="PR:Q6IMH0"/>
<dbReference type="Proteomes" id="UP000000589">
    <property type="component" value="Chromosome 8"/>
</dbReference>
<dbReference type="RNAct" id="Q6IMH0">
    <property type="molecule type" value="protein"/>
</dbReference>
<dbReference type="Bgee" id="ENSMUSG00000090206">
    <property type="expression patterns" value="Expressed in seminiferous tubule of testis and 37 other cell types or tissues"/>
</dbReference>
<dbReference type="ExpressionAtlas" id="Q6IMH0">
    <property type="expression patterns" value="baseline and differential"/>
</dbReference>
<dbReference type="GO" id="GO:0160111">
    <property type="term" value="C:axonemal A tubule inner sheath"/>
    <property type="evidence" value="ECO:0000314"/>
    <property type="project" value="MGI"/>
</dbReference>
<dbReference type="GO" id="GO:0036126">
    <property type="term" value="C:sperm flagellum"/>
    <property type="evidence" value="ECO:0000314"/>
    <property type="project" value="UniProtKB"/>
</dbReference>
<dbReference type="GO" id="GO:0030317">
    <property type="term" value="P:flagellated sperm motility"/>
    <property type="evidence" value="ECO:0000314"/>
    <property type="project" value="UniProtKB"/>
</dbReference>
<dbReference type="InterPro" id="IPR034584">
    <property type="entry name" value="SPMIP8"/>
</dbReference>
<dbReference type="PANTHER" id="PTHR35348">
    <property type="entry name" value="TESTIS, PROSTATE AND PLACENTA-EXPRESSED PROTEIN"/>
    <property type="match status" value="1"/>
</dbReference>
<dbReference type="PANTHER" id="PTHR35348:SF1">
    <property type="entry name" value="TESTIS, PROSTATE AND PLACENTA-EXPRESSED PROTEIN"/>
    <property type="match status" value="1"/>
</dbReference>
<dbReference type="Pfam" id="PF22574">
    <property type="entry name" value="SPMIP8"/>
    <property type="match status" value="1"/>
</dbReference>
<name>SMIP8_MOUSE</name>
<evidence type="ECO:0000269" key="1">
    <source>
    </source>
</evidence>
<evidence type="ECO:0000269" key="2">
    <source>
    </source>
</evidence>
<evidence type="ECO:0000303" key="3">
    <source>
    </source>
</evidence>
<evidence type="ECO:0000303" key="4">
    <source>
    </source>
</evidence>
<evidence type="ECO:0000303" key="5">
    <source>
    </source>
</evidence>
<evidence type="ECO:0000305" key="6"/>
<evidence type="ECO:0007744" key="7">
    <source>
        <dbReference type="PDB" id="8IYJ"/>
    </source>
</evidence>
<comment type="function">
    <text evidence="2">Microtubule inner protein (MIP) part of the dynein-decorated doublet microtubules (DMTs) in flagellum axoneme (PubMed:37295417). May serve to reinforce and thus stabilize the microtubule structure in the sperm flagella (PubMed:37295417).</text>
</comment>
<comment type="subunit">
    <text evidence="2">Microtubule inner protein component of sperm flagellar doublet microtubules.</text>
</comment>
<comment type="subcellular location">
    <subcellularLocation>
        <location evidence="2">Cytoplasm</location>
        <location evidence="2">Cytoskeleton</location>
        <location evidence="2">Flagellum axoneme</location>
    </subcellularLocation>
    <text evidence="2">Localizes to the A-tubules of DMTs.</text>
</comment>
<comment type="alternative products">
    <event type="alternative splicing"/>
    <isoform>
        <id>Q6IMH0-1</id>
        <name>1</name>
        <sequence type="displayed"/>
    </isoform>
    <isoform>
        <id>Q6IMH0-2</id>
        <name>2</name>
        <sequence type="described" ref="VSP_032404"/>
    </isoform>
</comment>
<comment type="tissue specificity">
    <text evidence="1">Expressed in testis.</text>
</comment>
<comment type="disruption phenotype">
    <text evidence="1">Deficient mice are viable and have normal fertility.</text>
</comment>
<reference key="1">
    <citation type="journal article" date="2005" name="Science">
        <title>The transcriptional landscape of the mammalian genome.</title>
        <authorList>
            <person name="Carninci P."/>
            <person name="Kasukawa T."/>
            <person name="Katayama S."/>
            <person name="Gough J."/>
            <person name="Frith M.C."/>
            <person name="Maeda N."/>
            <person name="Oyama R."/>
            <person name="Ravasi T."/>
            <person name="Lenhard B."/>
            <person name="Wells C."/>
            <person name="Kodzius R."/>
            <person name="Shimokawa K."/>
            <person name="Bajic V.B."/>
            <person name="Brenner S.E."/>
            <person name="Batalov S."/>
            <person name="Forrest A.R."/>
            <person name="Zavolan M."/>
            <person name="Davis M.J."/>
            <person name="Wilming L.G."/>
            <person name="Aidinis V."/>
            <person name="Allen J.E."/>
            <person name="Ambesi-Impiombato A."/>
            <person name="Apweiler R."/>
            <person name="Aturaliya R.N."/>
            <person name="Bailey T.L."/>
            <person name="Bansal M."/>
            <person name="Baxter L."/>
            <person name="Beisel K.W."/>
            <person name="Bersano T."/>
            <person name="Bono H."/>
            <person name="Chalk A.M."/>
            <person name="Chiu K.P."/>
            <person name="Choudhary V."/>
            <person name="Christoffels A."/>
            <person name="Clutterbuck D.R."/>
            <person name="Crowe M.L."/>
            <person name="Dalla E."/>
            <person name="Dalrymple B.P."/>
            <person name="de Bono B."/>
            <person name="Della Gatta G."/>
            <person name="di Bernardo D."/>
            <person name="Down T."/>
            <person name="Engstrom P."/>
            <person name="Fagiolini M."/>
            <person name="Faulkner G."/>
            <person name="Fletcher C.F."/>
            <person name="Fukushima T."/>
            <person name="Furuno M."/>
            <person name="Futaki S."/>
            <person name="Gariboldi M."/>
            <person name="Georgii-Hemming P."/>
            <person name="Gingeras T.R."/>
            <person name="Gojobori T."/>
            <person name="Green R.E."/>
            <person name="Gustincich S."/>
            <person name="Harbers M."/>
            <person name="Hayashi Y."/>
            <person name="Hensch T.K."/>
            <person name="Hirokawa N."/>
            <person name="Hill D."/>
            <person name="Huminiecki L."/>
            <person name="Iacono M."/>
            <person name="Ikeo K."/>
            <person name="Iwama A."/>
            <person name="Ishikawa T."/>
            <person name="Jakt M."/>
            <person name="Kanapin A."/>
            <person name="Katoh M."/>
            <person name="Kawasawa Y."/>
            <person name="Kelso J."/>
            <person name="Kitamura H."/>
            <person name="Kitano H."/>
            <person name="Kollias G."/>
            <person name="Krishnan S.P."/>
            <person name="Kruger A."/>
            <person name="Kummerfeld S.K."/>
            <person name="Kurochkin I.V."/>
            <person name="Lareau L.F."/>
            <person name="Lazarevic D."/>
            <person name="Lipovich L."/>
            <person name="Liu J."/>
            <person name="Liuni S."/>
            <person name="McWilliam S."/>
            <person name="Madan Babu M."/>
            <person name="Madera M."/>
            <person name="Marchionni L."/>
            <person name="Matsuda H."/>
            <person name="Matsuzawa S."/>
            <person name="Miki H."/>
            <person name="Mignone F."/>
            <person name="Miyake S."/>
            <person name="Morris K."/>
            <person name="Mottagui-Tabar S."/>
            <person name="Mulder N."/>
            <person name="Nakano N."/>
            <person name="Nakauchi H."/>
            <person name="Ng P."/>
            <person name="Nilsson R."/>
            <person name="Nishiguchi S."/>
            <person name="Nishikawa S."/>
            <person name="Nori F."/>
            <person name="Ohara O."/>
            <person name="Okazaki Y."/>
            <person name="Orlando V."/>
            <person name="Pang K.C."/>
            <person name="Pavan W.J."/>
            <person name="Pavesi G."/>
            <person name="Pesole G."/>
            <person name="Petrovsky N."/>
            <person name="Piazza S."/>
            <person name="Reed J."/>
            <person name="Reid J.F."/>
            <person name="Ring B.Z."/>
            <person name="Ringwald M."/>
            <person name="Rost B."/>
            <person name="Ruan Y."/>
            <person name="Salzberg S.L."/>
            <person name="Sandelin A."/>
            <person name="Schneider C."/>
            <person name="Schoenbach C."/>
            <person name="Sekiguchi K."/>
            <person name="Semple C.A."/>
            <person name="Seno S."/>
            <person name="Sessa L."/>
            <person name="Sheng Y."/>
            <person name="Shibata Y."/>
            <person name="Shimada H."/>
            <person name="Shimada K."/>
            <person name="Silva D."/>
            <person name="Sinclair B."/>
            <person name="Sperling S."/>
            <person name="Stupka E."/>
            <person name="Sugiura K."/>
            <person name="Sultana R."/>
            <person name="Takenaka Y."/>
            <person name="Taki K."/>
            <person name="Tammoja K."/>
            <person name="Tan S.L."/>
            <person name="Tang S."/>
            <person name="Taylor M.S."/>
            <person name="Tegner J."/>
            <person name="Teichmann S.A."/>
            <person name="Ueda H.R."/>
            <person name="van Nimwegen E."/>
            <person name="Verardo R."/>
            <person name="Wei C.L."/>
            <person name="Yagi K."/>
            <person name="Yamanishi H."/>
            <person name="Zabarovsky E."/>
            <person name="Zhu S."/>
            <person name="Zimmer A."/>
            <person name="Hide W."/>
            <person name="Bult C."/>
            <person name="Grimmond S.M."/>
            <person name="Teasdale R.D."/>
            <person name="Liu E.T."/>
            <person name="Brusic V."/>
            <person name="Quackenbush J."/>
            <person name="Wahlestedt C."/>
            <person name="Mattick J.S."/>
            <person name="Hume D.A."/>
            <person name="Kai C."/>
            <person name="Sasaki D."/>
            <person name="Tomaru Y."/>
            <person name="Fukuda S."/>
            <person name="Kanamori-Katayama M."/>
            <person name="Suzuki M."/>
            <person name="Aoki J."/>
            <person name="Arakawa T."/>
            <person name="Iida J."/>
            <person name="Imamura K."/>
            <person name="Itoh M."/>
            <person name="Kato T."/>
            <person name="Kawaji H."/>
            <person name="Kawagashira N."/>
            <person name="Kawashima T."/>
            <person name="Kojima M."/>
            <person name="Kondo S."/>
            <person name="Konno H."/>
            <person name="Nakano K."/>
            <person name="Ninomiya N."/>
            <person name="Nishio T."/>
            <person name="Okada M."/>
            <person name="Plessy C."/>
            <person name="Shibata K."/>
            <person name="Shiraki T."/>
            <person name="Suzuki S."/>
            <person name="Tagami M."/>
            <person name="Waki K."/>
            <person name="Watahiki A."/>
            <person name="Okamura-Oho Y."/>
            <person name="Suzuki H."/>
            <person name="Kawai J."/>
            <person name="Hayashizaki Y."/>
        </authorList>
    </citation>
    <scope>NUCLEOTIDE SEQUENCE [LARGE SCALE MRNA] (ISOFORM 2)</scope>
    <source>
        <strain>C57BL/6J</strain>
        <tissue>Testis</tissue>
    </source>
</reference>
<reference key="2">
    <citation type="journal article" date="2004" name="Genome Res.">
        <title>The status, quality, and expansion of the NIH full-length cDNA project: the Mammalian Gene Collection (MGC).</title>
        <authorList>
            <consortium name="The MGC Project Team"/>
        </authorList>
    </citation>
    <scope>NUCLEOTIDE SEQUENCE [LARGE SCALE MRNA] (ISOFORMS 1 AND 2)</scope>
    <source>
        <tissue>Testis</tissue>
    </source>
</reference>
<reference key="3">
    <citation type="journal article" date="2003" name="Biochem. Biophys. Res. Commun.">
        <title>TEPP, a new gene specifically expressed in testis, prostate, and placenta and well conserved in chordates.</title>
        <authorList>
            <person name="Bera T.K."/>
            <person name="Hahn Y."/>
            <person name="Lee B."/>
            <person name="Pastan I.H."/>
        </authorList>
    </citation>
    <scope>IDENTIFICATION</scope>
</reference>
<reference key="4">
    <citation type="journal article" date="2016" name="Proc. Natl. Acad. Sci. U.S.A.">
        <title>Genome engineering uncovers 54 evolutionarily conserved and testis-enriched genes that are not required for male fertility in mice.</title>
        <authorList>
            <person name="Miyata H."/>
            <person name="Castaneda J.M."/>
            <person name="Fujihara Y."/>
            <person name="Yu Z."/>
            <person name="Archambeault D.R."/>
            <person name="Isotani A."/>
            <person name="Kiyozumi D."/>
            <person name="Kriseman M.L."/>
            <person name="Mashiko D."/>
            <person name="Matsumura T."/>
            <person name="Matzuk R.M."/>
            <person name="Mori M."/>
            <person name="Noda T."/>
            <person name="Oji A."/>
            <person name="Okabe M."/>
            <person name="Prunskaite-Hyyrylainen R."/>
            <person name="Ramirez-Solis R."/>
            <person name="Satouh Y."/>
            <person name="Zhang Q."/>
            <person name="Ikawa M."/>
            <person name="Matzuk M.M."/>
        </authorList>
    </citation>
    <scope>TISSUE SPECIFICITY</scope>
    <scope>DISRUPTION PHENOTYPE</scope>
</reference>
<reference evidence="7" key="5">
    <citation type="journal article" date="2023" name="Cell">
        <title>Structures of sperm flagellar doublet microtubules expand the genetic spectrum of male infertility.</title>
        <authorList>
            <person name="Zhou L."/>
            <person name="Liu H."/>
            <person name="Liu S."/>
            <person name="Yang X."/>
            <person name="Dong Y."/>
            <person name="Pan Y."/>
            <person name="Xiao Z."/>
            <person name="Zheng B."/>
            <person name="Sun Y."/>
            <person name="Huang P."/>
            <person name="Zhang X."/>
            <person name="Hu J."/>
            <person name="Sun R."/>
            <person name="Feng S."/>
            <person name="Zhu Y."/>
            <person name="Liu M."/>
            <person name="Gui M."/>
            <person name="Wu J."/>
        </authorList>
    </citation>
    <scope>STRUCTURE BY ELECTRON MICROSCOPY (3.50 ANGSTROMS) OF SPERM FLAGELLAR DOUBLET MICROTUBULES</scope>
    <scope>SUBCELLULAR LOCATION</scope>
    <scope>SUBUNIT</scope>
</reference>
<keyword id="KW-0002">3D-structure</keyword>
<keyword id="KW-0025">Alternative splicing</keyword>
<keyword id="KW-0966">Cell projection</keyword>
<keyword id="KW-0969">Cilium</keyword>
<keyword id="KW-0963">Cytoplasm</keyword>
<keyword id="KW-0206">Cytoskeleton</keyword>
<keyword id="KW-0282">Flagellum</keyword>
<keyword id="KW-1185">Reference proteome</keyword>
<organism>
    <name type="scientific">Mus musculus</name>
    <name type="common">Mouse</name>
    <dbReference type="NCBI Taxonomy" id="10090"/>
    <lineage>
        <taxon>Eukaryota</taxon>
        <taxon>Metazoa</taxon>
        <taxon>Chordata</taxon>
        <taxon>Craniata</taxon>
        <taxon>Vertebrata</taxon>
        <taxon>Euteleostomi</taxon>
        <taxon>Mammalia</taxon>
        <taxon>Eutheria</taxon>
        <taxon>Euarchontoglires</taxon>
        <taxon>Glires</taxon>
        <taxon>Rodentia</taxon>
        <taxon>Myomorpha</taxon>
        <taxon>Muroidea</taxon>
        <taxon>Muridae</taxon>
        <taxon>Murinae</taxon>
        <taxon>Mus</taxon>
        <taxon>Mus</taxon>
    </lineage>
</organism>
<feature type="chain" id="PRO_0000325778" description="Sperm microtubule inner protein 8">
    <location>
        <begin position="1"/>
        <end position="216"/>
    </location>
</feature>
<feature type="splice variant" id="VSP_032404" description="In isoform 2." evidence="3 4">
    <location>
        <begin position="1"/>
        <end position="112"/>
    </location>
</feature>
<feature type="sequence conflict" description="In Ref. 2; AAI04383." evidence="6" ref="2">
    <original>S</original>
    <variation>F</variation>
    <location>
        <position position="142"/>
    </location>
</feature>
<gene>
    <name type="primary">Spmip8</name>
    <name evidence="5" type="synonym">Tepp</name>
</gene>
<protein>
    <recommendedName>
        <fullName>Sperm microtubule inner protein 8</fullName>
    </recommendedName>
    <alternativeName>
        <fullName evidence="5">Testis, prostate and placenta-expressed protein</fullName>
    </alternativeName>
</protein>
<accession>Q6IMH0</accession>
<accession>Q3SXB6</accession>
<accession>Q9D9K7</accession>